<gene>
    <name type="primary">icaB</name>
    <name type="ordered locus">MW2588</name>
</gene>
<sequence>MKYRKFIILVLSILIILPVSTLDGHHIANADDDSPKKLKYKENSALALNYHRVRKANFLNNFIYFFSSSKEIKNYSVSQSQFESQIKWLKSHDAKFLTLKEFLYYKKKGKFPKRSVWINFDDMDETIYENAYPILKKYKIPATGFIITGHVGEENFHNLDMISKKELKEMYKTGLWEFETHTHDLHNLSKNNKSKLMKASEATIIKDLNKSEKYLTKNFKKSQKTIAYPYGLMNDDKLPVIKKAGLKYGFSLEEKAVTPNSNDYYIPRILISDDAFEHLIKRWDGFHEKD</sequence>
<keyword id="KW-0134">Cell wall</keyword>
<keyword id="KW-0378">Hydrolase</keyword>
<keyword id="KW-0964">Secreted</keyword>
<keyword id="KW-0732">Signal</keyword>
<reference key="1">
    <citation type="journal article" date="2002" name="Lancet">
        <title>Genome and virulence determinants of high virulence community-acquired MRSA.</title>
        <authorList>
            <person name="Baba T."/>
            <person name="Takeuchi F."/>
            <person name="Kuroda M."/>
            <person name="Yuzawa H."/>
            <person name="Aoki K."/>
            <person name="Oguchi A."/>
            <person name="Nagai Y."/>
            <person name="Iwama N."/>
            <person name="Asano K."/>
            <person name="Naimi T."/>
            <person name="Kuroda H."/>
            <person name="Cui L."/>
            <person name="Yamamoto K."/>
            <person name="Hiramatsu K."/>
        </authorList>
    </citation>
    <scope>NUCLEOTIDE SEQUENCE [LARGE SCALE GENOMIC DNA]</scope>
    <source>
        <strain>MW2</strain>
    </source>
</reference>
<comment type="function">
    <text evidence="1">Catalyzes the N-deacetylation of poly-beta-1,6-N-acetyl-D-glucosamine (PNAG, also referred to as PIA), a biofilm adhesin polysaccharide. N-deacetylation is crucial for attachment of the polysaccharide to the bacterial cell surface; it leads to the introduction of positive charges in the otherwise neutral PIA polymer, allowing electrostatic interactions (By similarity).</text>
</comment>
<comment type="subcellular location">
    <subcellularLocation>
        <location>Secreted</location>
        <location>Cell wall</location>
    </subcellularLocation>
    <text evidence="1">Attached to the cell surface.</text>
</comment>
<comment type="similarity">
    <text evidence="4">Belongs to the polysaccharide deacetylase family.</text>
</comment>
<protein>
    <recommendedName>
        <fullName>Poly-beta-1,6-N-acetyl-D-glucosamine N-deacetylase</fullName>
        <shortName>PNAG N-deacetylase</shortName>
        <shortName>Poly-beta-1,6-GlcNAc N-deacetylase</shortName>
        <ecNumber>3.5.1.-</ecNumber>
    </recommendedName>
    <alternativeName>
        <fullName>Biofilm polysaccharide intercellular adhesin deacetylase</fullName>
        <shortName>Biofilm PIA deacetylase</shortName>
    </alternativeName>
    <alternativeName>
        <fullName>Intercellular adhesion protein B</fullName>
    </alternativeName>
</protein>
<organism>
    <name type="scientific">Staphylococcus aureus (strain MW2)</name>
    <dbReference type="NCBI Taxonomy" id="196620"/>
    <lineage>
        <taxon>Bacteria</taxon>
        <taxon>Bacillati</taxon>
        <taxon>Bacillota</taxon>
        <taxon>Bacilli</taxon>
        <taxon>Bacillales</taxon>
        <taxon>Staphylococcaceae</taxon>
        <taxon>Staphylococcus</taxon>
    </lineage>
</organism>
<accession>Q8NUI6</accession>
<proteinExistence type="inferred from homology"/>
<name>ICAB_STAAW</name>
<dbReference type="EC" id="3.5.1.-"/>
<dbReference type="EMBL" id="BA000033">
    <property type="protein sequence ID" value="BAB96453.1"/>
    <property type="molecule type" value="Genomic_DNA"/>
</dbReference>
<dbReference type="RefSeq" id="WP_000877317.1">
    <property type="nucleotide sequence ID" value="NC_003923.1"/>
</dbReference>
<dbReference type="SMR" id="Q8NUI6"/>
<dbReference type="KEGG" id="sam:MW2588"/>
<dbReference type="HOGENOM" id="CLU_030024_3_2_9"/>
<dbReference type="GO" id="GO:0005576">
    <property type="term" value="C:extracellular region"/>
    <property type="evidence" value="ECO:0007669"/>
    <property type="project" value="UniProtKB-KW"/>
</dbReference>
<dbReference type="GO" id="GO:0016811">
    <property type="term" value="F:hydrolase activity, acting on carbon-nitrogen (but not peptide) bonds, in linear amides"/>
    <property type="evidence" value="ECO:0007669"/>
    <property type="project" value="InterPro"/>
</dbReference>
<dbReference type="GO" id="GO:0005975">
    <property type="term" value="P:carbohydrate metabolic process"/>
    <property type="evidence" value="ECO:0007669"/>
    <property type="project" value="InterPro"/>
</dbReference>
<dbReference type="Gene3D" id="3.20.20.370">
    <property type="entry name" value="Glycoside hydrolase/deacetylase"/>
    <property type="match status" value="1"/>
</dbReference>
<dbReference type="InterPro" id="IPR011330">
    <property type="entry name" value="Glyco_hydro/deAcase_b/a-brl"/>
</dbReference>
<dbReference type="InterPro" id="IPR002509">
    <property type="entry name" value="NODB_dom"/>
</dbReference>
<dbReference type="InterPro" id="IPR023872">
    <property type="entry name" value="PNAG_deacetylase"/>
</dbReference>
<dbReference type="InterPro" id="IPR051398">
    <property type="entry name" value="Polysacch_Deacetylase"/>
</dbReference>
<dbReference type="NCBIfam" id="TIGR03933">
    <property type="entry name" value="PIA_icaB"/>
    <property type="match status" value="1"/>
</dbReference>
<dbReference type="PANTHER" id="PTHR34216">
    <property type="match status" value="1"/>
</dbReference>
<dbReference type="PANTHER" id="PTHR34216:SF3">
    <property type="entry name" value="POLY-BETA-1,6-N-ACETYL-D-GLUCOSAMINE N-DEACETYLASE"/>
    <property type="match status" value="1"/>
</dbReference>
<dbReference type="Pfam" id="PF01522">
    <property type="entry name" value="Polysacc_deac_1"/>
    <property type="match status" value="1"/>
</dbReference>
<dbReference type="SUPFAM" id="SSF88713">
    <property type="entry name" value="Glycoside hydrolase/deacetylase"/>
    <property type="match status" value="1"/>
</dbReference>
<dbReference type="PROSITE" id="PS51677">
    <property type="entry name" value="NODB"/>
    <property type="match status" value="1"/>
</dbReference>
<evidence type="ECO:0000250" key="1"/>
<evidence type="ECO:0000255" key="2"/>
<evidence type="ECO:0000255" key="3">
    <source>
        <dbReference type="PROSITE-ProRule" id="PRU01014"/>
    </source>
</evidence>
<evidence type="ECO:0000305" key="4"/>
<feature type="signal peptide" evidence="2">
    <location>
        <begin position="1"/>
        <end position="28"/>
    </location>
</feature>
<feature type="chain" id="PRO_0000024839" description="Poly-beta-1,6-N-acetyl-D-glucosamine N-deacetylase">
    <location>
        <begin position="29"/>
        <end position="290"/>
    </location>
</feature>
<feature type="domain" description="NodB homology" evidence="3">
    <location>
        <begin position="114"/>
        <end position="290"/>
    </location>
</feature>